<proteinExistence type="inferred from homology"/>
<comment type="function">
    <text evidence="1">One of the components of the core complex of photosystem II (PSII). It binds chlorophyll and helps catalyze the primary light-induced photochemical processes of PSII. PSII is a light-driven water:plastoquinone oxidoreductase, using light energy to abstract electrons from H(2)O, generating O(2) and a proton gradient subsequently used for ATP formation.</text>
</comment>
<comment type="cofactor">
    <text evidence="1">Binds multiple chlorophylls and provides some of the ligands for the Ca-4Mn-5O cluster of the oxygen-evolving complex. It may also provide a ligand for a Cl- that is required for oxygen evolution. PSII binds additional chlorophylls, carotenoids and specific lipids.</text>
</comment>
<comment type="subunit">
    <text evidence="1">PSII is composed of 1 copy each of membrane proteins PsbA, PsbB, PsbC, PsbD, PsbE, PsbF, PsbH, PsbI, PsbJ, PsbK, PsbL, PsbM, PsbT, PsbX, PsbY, PsbZ, Psb30/Ycf12, at least 3 peripheral proteins of the oxygen-evolving complex and a large number of cofactors. It forms dimeric complexes.</text>
</comment>
<comment type="subcellular location">
    <subcellularLocation>
        <location evidence="1">Plastid</location>
        <location evidence="1">Chloroplast thylakoid membrane</location>
        <topology evidence="1">Multi-pass membrane protein</topology>
    </subcellularLocation>
</comment>
<comment type="similarity">
    <text evidence="1">Belongs to the PsbB/PsbC family. PsbC subfamily.</text>
</comment>
<evidence type="ECO:0000255" key="1">
    <source>
        <dbReference type="HAMAP-Rule" id="MF_01496"/>
    </source>
</evidence>
<protein>
    <recommendedName>
        <fullName evidence="1">Photosystem II CP43 reaction center protein</fullName>
    </recommendedName>
    <alternativeName>
        <fullName evidence="1">PSII 43 kDa protein</fullName>
    </alternativeName>
    <alternativeName>
        <fullName evidence="1">Protein CP-43</fullName>
    </alternativeName>
</protein>
<gene>
    <name evidence="1" type="primary">psbC</name>
</gene>
<organism>
    <name type="scientific">Porphyra purpurea</name>
    <name type="common">Red seaweed</name>
    <name type="synonym">Ulva purpurea</name>
    <dbReference type="NCBI Taxonomy" id="2787"/>
    <lineage>
        <taxon>Eukaryota</taxon>
        <taxon>Rhodophyta</taxon>
        <taxon>Bangiophyceae</taxon>
        <taxon>Bangiales</taxon>
        <taxon>Bangiaceae</taxon>
        <taxon>Porphyra</taxon>
    </lineage>
</organism>
<name>PSBC_PORPU</name>
<accession>P51356</accession>
<keyword id="KW-0148">Chlorophyll</keyword>
<keyword id="KW-0150">Chloroplast</keyword>
<keyword id="KW-0157">Chromophore</keyword>
<keyword id="KW-0464">Manganese</keyword>
<keyword id="KW-0472">Membrane</keyword>
<keyword id="KW-0479">Metal-binding</keyword>
<keyword id="KW-0602">Photosynthesis</keyword>
<keyword id="KW-0604">Photosystem II</keyword>
<keyword id="KW-0934">Plastid</keyword>
<keyword id="KW-0793">Thylakoid</keyword>
<keyword id="KW-0812">Transmembrane</keyword>
<keyword id="KW-1133">Transmembrane helix</keyword>
<dbReference type="EMBL" id="U38804">
    <property type="protein sequence ID" value="AAC08242.1"/>
    <property type="molecule type" value="Genomic_DNA"/>
</dbReference>
<dbReference type="PIR" id="S73277">
    <property type="entry name" value="S73277"/>
</dbReference>
<dbReference type="RefSeq" id="NP_053966.2">
    <property type="nucleotide sequence ID" value="NC_000925.1"/>
</dbReference>
<dbReference type="SMR" id="P51356"/>
<dbReference type="GeneID" id="809992"/>
<dbReference type="GO" id="GO:0009535">
    <property type="term" value="C:chloroplast thylakoid membrane"/>
    <property type="evidence" value="ECO:0007669"/>
    <property type="project" value="UniProtKB-SubCell"/>
</dbReference>
<dbReference type="GO" id="GO:0009523">
    <property type="term" value="C:photosystem II"/>
    <property type="evidence" value="ECO:0007669"/>
    <property type="project" value="UniProtKB-KW"/>
</dbReference>
<dbReference type="GO" id="GO:0016168">
    <property type="term" value="F:chlorophyll binding"/>
    <property type="evidence" value="ECO:0007669"/>
    <property type="project" value="UniProtKB-UniRule"/>
</dbReference>
<dbReference type="GO" id="GO:0045156">
    <property type="term" value="F:electron transporter, transferring electrons within the cyclic electron transport pathway of photosynthesis activity"/>
    <property type="evidence" value="ECO:0007669"/>
    <property type="project" value="InterPro"/>
</dbReference>
<dbReference type="GO" id="GO:0046872">
    <property type="term" value="F:metal ion binding"/>
    <property type="evidence" value="ECO:0007669"/>
    <property type="project" value="UniProtKB-KW"/>
</dbReference>
<dbReference type="GO" id="GO:0009772">
    <property type="term" value="P:photosynthetic electron transport in photosystem II"/>
    <property type="evidence" value="ECO:0007669"/>
    <property type="project" value="InterPro"/>
</dbReference>
<dbReference type="FunFam" id="1.10.10.670:FF:000001">
    <property type="entry name" value="Photosystem II CP43 reaction center protein"/>
    <property type="match status" value="1"/>
</dbReference>
<dbReference type="Gene3D" id="1.10.10.670">
    <property type="entry name" value="photosystem ii from thermosynechococcus elongatus"/>
    <property type="match status" value="1"/>
</dbReference>
<dbReference type="HAMAP" id="MF_01496">
    <property type="entry name" value="PSII_PsbC_CP43"/>
    <property type="match status" value="1"/>
</dbReference>
<dbReference type="InterPro" id="IPR000932">
    <property type="entry name" value="PS_antenna-like"/>
</dbReference>
<dbReference type="InterPro" id="IPR036001">
    <property type="entry name" value="PS_II_antenna-like_sf"/>
</dbReference>
<dbReference type="InterPro" id="IPR005869">
    <property type="entry name" value="PSII_PsbC"/>
</dbReference>
<dbReference type="InterPro" id="IPR044900">
    <property type="entry name" value="PSII_PsbC_sf"/>
</dbReference>
<dbReference type="NCBIfam" id="TIGR01153">
    <property type="entry name" value="psbC"/>
    <property type="match status" value="1"/>
</dbReference>
<dbReference type="Pfam" id="PF00421">
    <property type="entry name" value="PSII"/>
    <property type="match status" value="1"/>
</dbReference>
<dbReference type="SUPFAM" id="SSF161077">
    <property type="entry name" value="Photosystem II antenna protein-like"/>
    <property type="match status" value="1"/>
</dbReference>
<reference key="1">
    <citation type="journal article" date="1995" name="Plant Mol. Biol. Rep.">
        <title>Complete nucleotide sequence of the Porphyra purpurea chloroplast genome.</title>
        <authorList>
            <person name="Reith M.E."/>
            <person name="Munholland J."/>
        </authorList>
    </citation>
    <scope>NUCLEOTIDE SEQUENCE [LARGE SCALE GENOMIC DNA]</scope>
    <source>
        <strain>Avonport</strain>
    </source>
</reference>
<geneLocation type="chloroplast"/>
<feature type="propeptide" id="PRO_0000431225" evidence="1">
    <location>
        <begin position="1"/>
        <end position="28"/>
    </location>
</feature>
<feature type="chain" id="PRO_0000077526" description="Photosystem II CP43 reaction center protein" evidence="1">
    <location>
        <begin position="29"/>
        <end position="487"/>
    </location>
</feature>
<feature type="transmembrane region" description="Helical" evidence="1">
    <location>
        <begin position="83"/>
        <end position="107"/>
    </location>
</feature>
<feature type="transmembrane region" description="Helical" evidence="1">
    <location>
        <begin position="148"/>
        <end position="169"/>
    </location>
</feature>
<feature type="transmembrane region" description="Helical" evidence="1">
    <location>
        <begin position="192"/>
        <end position="214"/>
    </location>
</feature>
<feature type="transmembrane region" description="Helical" evidence="1">
    <location>
        <begin position="269"/>
        <end position="289"/>
    </location>
</feature>
<feature type="transmembrane region" description="Helical" evidence="1">
    <location>
        <begin position="305"/>
        <end position="326"/>
    </location>
</feature>
<feature type="transmembrane region" description="Helical" evidence="1">
    <location>
        <begin position="461"/>
        <end position="485"/>
    </location>
</feature>
<feature type="binding site" evidence="1">
    <location>
        <position position="381"/>
    </location>
    <ligand>
        <name>[CaMn4O5] cluster</name>
        <dbReference type="ChEBI" id="CHEBI:189552"/>
    </ligand>
</feature>
<sequence length="487" mass="53617">MKVFVLGWLLKINLMKTLYSQRRFYHVETPFNTNVGVGGRDIESTGFAWWSGNARLINVSGKLLGAHVAHAGIMVFWTGAMTLFEVAHFVPEKPLYEQGLILIPHLATLGWGVGPGGEIFNTYPYFVVGVVHLISSAVLGFGGLYHSLIGPDTLEESFPFFGYDWRDKNKMTTILGIHLVLLGIGAFLLVIKSLFVGGVYDTWAPGGGDVRFVSNPTLNPLVIFGYVLKSPFGGDGWIVSVNNMEDLIGGHVWIGIICIAGGIWHILTKPFAWARRAFVWSGEAYLSYSLGALSIMGLTASNFVWYNNTAYPSEFYGPTGPEASQAQAFTFLVRDQRLGANVASSQGPTGLGKYLMRSPSGEIIFGGETMRFWDLRAPWVEPLRGPNGLDLNKIKNDIQPWQERRAAEYMTHAPLGSLNSVGGVATEINSVNYVSPRSWLTTSHFFLGFFLFIGHLWHAGRARAAAAGFEKGINRENEPVLSMRPLD</sequence>